<feature type="chain" id="PRO_0000067444" description="Squalene synthase">
    <location>
        <begin position="1"/>
        <end position="416"/>
    </location>
</feature>
<feature type="transmembrane region" description="Helical" evidence="3">
    <location>
        <begin position="284"/>
        <end position="304"/>
    </location>
</feature>
<feature type="transmembrane region" description="Helical" evidence="3">
    <location>
        <begin position="384"/>
        <end position="404"/>
    </location>
</feature>
<feature type="binding site" evidence="1">
    <location>
        <position position="52"/>
    </location>
    <ligand>
        <name>NADP(+)</name>
        <dbReference type="ChEBI" id="CHEBI:58349"/>
    </ligand>
</feature>
<feature type="binding site" evidence="1">
    <location>
        <position position="77"/>
    </location>
    <ligand>
        <name>NADP(+)</name>
        <dbReference type="ChEBI" id="CHEBI:58349"/>
    </ligand>
</feature>
<feature type="binding site" evidence="1">
    <location>
        <position position="80"/>
    </location>
    <ligand>
        <name>Mg(2+)</name>
        <dbReference type="ChEBI" id="CHEBI:18420"/>
    </ligand>
</feature>
<feature type="binding site" evidence="1">
    <location>
        <position position="83"/>
    </location>
    <ligand>
        <name>Mg(2+)</name>
        <dbReference type="ChEBI" id="CHEBI:18420"/>
    </ligand>
</feature>
<feature type="binding site" evidence="1">
    <location>
        <position position="84"/>
    </location>
    <ligand>
        <name>Mg(2+)</name>
        <dbReference type="ChEBI" id="CHEBI:18420"/>
    </ligand>
</feature>
<feature type="binding site" evidence="1">
    <location>
        <position position="218"/>
    </location>
    <ligand>
        <name>NADP(+)</name>
        <dbReference type="ChEBI" id="CHEBI:58349"/>
    </ligand>
</feature>
<feature type="binding site" evidence="1">
    <location>
        <position position="315"/>
    </location>
    <ligand>
        <name>NADP(+)</name>
        <dbReference type="ChEBI" id="CHEBI:58349"/>
    </ligand>
</feature>
<feature type="binding site" evidence="1">
    <location>
        <position position="317"/>
    </location>
    <ligand>
        <name>NADP(+)</name>
        <dbReference type="ChEBI" id="CHEBI:58349"/>
    </ligand>
</feature>
<feature type="sequence conflict" description="In Ref. 1; BAA06102." evidence="5" ref="1">
    <original>R</original>
    <variation>Q</variation>
    <location>
        <position position="149"/>
    </location>
</feature>
<accession>P53798</accession>
<accession>Q8BPF5</accession>
<protein>
    <recommendedName>
        <fullName>Squalene synthase</fullName>
        <shortName>SQS</shortName>
        <shortName>SS</shortName>
        <ecNumber evidence="4">2.5.1.21</ecNumber>
    </recommendedName>
    <alternativeName>
        <fullName>FPP:FPP farnesyltransferase</fullName>
    </alternativeName>
    <alternativeName>
        <fullName>Farnesyl-diphosphate farnesyltransferase</fullName>
    </alternativeName>
</protein>
<name>FDFT_MOUSE</name>
<reference key="1">
    <citation type="journal article" date="1995" name="Biochim. Biophys. Acta">
        <title>Molecular cloning and functional expression of a cDNA for mouse squalene synthase.</title>
        <authorList>
            <person name="Inoue T."/>
            <person name="Osumi T."/>
            <person name="Hata S."/>
        </authorList>
    </citation>
    <scope>NUCLEOTIDE SEQUENCE [MRNA]</scope>
    <source>
        <strain>C57BL/6 X CBA</strain>
        <tissue>Liver</tissue>
    </source>
</reference>
<reference key="2">
    <citation type="journal article" date="2005" name="Science">
        <title>The transcriptional landscape of the mammalian genome.</title>
        <authorList>
            <person name="Carninci P."/>
            <person name="Kasukawa T."/>
            <person name="Katayama S."/>
            <person name="Gough J."/>
            <person name="Frith M.C."/>
            <person name="Maeda N."/>
            <person name="Oyama R."/>
            <person name="Ravasi T."/>
            <person name="Lenhard B."/>
            <person name="Wells C."/>
            <person name="Kodzius R."/>
            <person name="Shimokawa K."/>
            <person name="Bajic V.B."/>
            <person name="Brenner S.E."/>
            <person name="Batalov S."/>
            <person name="Forrest A.R."/>
            <person name="Zavolan M."/>
            <person name="Davis M.J."/>
            <person name="Wilming L.G."/>
            <person name="Aidinis V."/>
            <person name="Allen J.E."/>
            <person name="Ambesi-Impiombato A."/>
            <person name="Apweiler R."/>
            <person name="Aturaliya R.N."/>
            <person name="Bailey T.L."/>
            <person name="Bansal M."/>
            <person name="Baxter L."/>
            <person name="Beisel K.W."/>
            <person name="Bersano T."/>
            <person name="Bono H."/>
            <person name="Chalk A.M."/>
            <person name="Chiu K.P."/>
            <person name="Choudhary V."/>
            <person name="Christoffels A."/>
            <person name="Clutterbuck D.R."/>
            <person name="Crowe M.L."/>
            <person name="Dalla E."/>
            <person name="Dalrymple B.P."/>
            <person name="de Bono B."/>
            <person name="Della Gatta G."/>
            <person name="di Bernardo D."/>
            <person name="Down T."/>
            <person name="Engstrom P."/>
            <person name="Fagiolini M."/>
            <person name="Faulkner G."/>
            <person name="Fletcher C.F."/>
            <person name="Fukushima T."/>
            <person name="Furuno M."/>
            <person name="Futaki S."/>
            <person name="Gariboldi M."/>
            <person name="Georgii-Hemming P."/>
            <person name="Gingeras T.R."/>
            <person name="Gojobori T."/>
            <person name="Green R.E."/>
            <person name="Gustincich S."/>
            <person name="Harbers M."/>
            <person name="Hayashi Y."/>
            <person name="Hensch T.K."/>
            <person name="Hirokawa N."/>
            <person name="Hill D."/>
            <person name="Huminiecki L."/>
            <person name="Iacono M."/>
            <person name="Ikeo K."/>
            <person name="Iwama A."/>
            <person name="Ishikawa T."/>
            <person name="Jakt M."/>
            <person name="Kanapin A."/>
            <person name="Katoh M."/>
            <person name="Kawasawa Y."/>
            <person name="Kelso J."/>
            <person name="Kitamura H."/>
            <person name="Kitano H."/>
            <person name="Kollias G."/>
            <person name="Krishnan S.P."/>
            <person name="Kruger A."/>
            <person name="Kummerfeld S.K."/>
            <person name="Kurochkin I.V."/>
            <person name="Lareau L.F."/>
            <person name="Lazarevic D."/>
            <person name="Lipovich L."/>
            <person name="Liu J."/>
            <person name="Liuni S."/>
            <person name="McWilliam S."/>
            <person name="Madan Babu M."/>
            <person name="Madera M."/>
            <person name="Marchionni L."/>
            <person name="Matsuda H."/>
            <person name="Matsuzawa S."/>
            <person name="Miki H."/>
            <person name="Mignone F."/>
            <person name="Miyake S."/>
            <person name="Morris K."/>
            <person name="Mottagui-Tabar S."/>
            <person name="Mulder N."/>
            <person name="Nakano N."/>
            <person name="Nakauchi H."/>
            <person name="Ng P."/>
            <person name="Nilsson R."/>
            <person name="Nishiguchi S."/>
            <person name="Nishikawa S."/>
            <person name="Nori F."/>
            <person name="Ohara O."/>
            <person name="Okazaki Y."/>
            <person name="Orlando V."/>
            <person name="Pang K.C."/>
            <person name="Pavan W.J."/>
            <person name="Pavesi G."/>
            <person name="Pesole G."/>
            <person name="Petrovsky N."/>
            <person name="Piazza S."/>
            <person name="Reed J."/>
            <person name="Reid J.F."/>
            <person name="Ring B.Z."/>
            <person name="Ringwald M."/>
            <person name="Rost B."/>
            <person name="Ruan Y."/>
            <person name="Salzberg S.L."/>
            <person name="Sandelin A."/>
            <person name="Schneider C."/>
            <person name="Schoenbach C."/>
            <person name="Sekiguchi K."/>
            <person name="Semple C.A."/>
            <person name="Seno S."/>
            <person name="Sessa L."/>
            <person name="Sheng Y."/>
            <person name="Shibata Y."/>
            <person name="Shimada H."/>
            <person name="Shimada K."/>
            <person name="Silva D."/>
            <person name="Sinclair B."/>
            <person name="Sperling S."/>
            <person name="Stupka E."/>
            <person name="Sugiura K."/>
            <person name="Sultana R."/>
            <person name="Takenaka Y."/>
            <person name="Taki K."/>
            <person name="Tammoja K."/>
            <person name="Tan S.L."/>
            <person name="Tang S."/>
            <person name="Taylor M.S."/>
            <person name="Tegner J."/>
            <person name="Teichmann S.A."/>
            <person name="Ueda H.R."/>
            <person name="van Nimwegen E."/>
            <person name="Verardo R."/>
            <person name="Wei C.L."/>
            <person name="Yagi K."/>
            <person name="Yamanishi H."/>
            <person name="Zabarovsky E."/>
            <person name="Zhu S."/>
            <person name="Zimmer A."/>
            <person name="Hide W."/>
            <person name="Bult C."/>
            <person name="Grimmond S.M."/>
            <person name="Teasdale R.D."/>
            <person name="Liu E.T."/>
            <person name="Brusic V."/>
            <person name="Quackenbush J."/>
            <person name="Wahlestedt C."/>
            <person name="Mattick J.S."/>
            <person name="Hume D.A."/>
            <person name="Kai C."/>
            <person name="Sasaki D."/>
            <person name="Tomaru Y."/>
            <person name="Fukuda S."/>
            <person name="Kanamori-Katayama M."/>
            <person name="Suzuki M."/>
            <person name="Aoki J."/>
            <person name="Arakawa T."/>
            <person name="Iida J."/>
            <person name="Imamura K."/>
            <person name="Itoh M."/>
            <person name="Kato T."/>
            <person name="Kawaji H."/>
            <person name="Kawagashira N."/>
            <person name="Kawashima T."/>
            <person name="Kojima M."/>
            <person name="Kondo S."/>
            <person name="Konno H."/>
            <person name="Nakano K."/>
            <person name="Ninomiya N."/>
            <person name="Nishio T."/>
            <person name="Okada M."/>
            <person name="Plessy C."/>
            <person name="Shibata K."/>
            <person name="Shiraki T."/>
            <person name="Suzuki S."/>
            <person name="Tagami M."/>
            <person name="Waki K."/>
            <person name="Watahiki A."/>
            <person name="Okamura-Oho Y."/>
            <person name="Suzuki H."/>
            <person name="Kawai J."/>
            <person name="Hayashizaki Y."/>
        </authorList>
    </citation>
    <scope>NUCLEOTIDE SEQUENCE [LARGE SCALE MRNA]</scope>
    <source>
        <strain>C57BL/6J</strain>
        <tissue>Amnion</tissue>
        <tissue>Embryo</tissue>
        <tissue>Heart</tissue>
        <tissue>Kidney</tissue>
        <tissue>Visual cortex</tissue>
    </source>
</reference>
<reference key="3">
    <citation type="submission" date="2005-07" db="EMBL/GenBank/DDBJ databases">
        <authorList>
            <person name="Mural R.J."/>
            <person name="Adams M.D."/>
            <person name="Myers E.W."/>
            <person name="Smith H.O."/>
            <person name="Venter J.C."/>
        </authorList>
    </citation>
    <scope>NUCLEOTIDE SEQUENCE [LARGE SCALE GENOMIC DNA]</scope>
</reference>
<reference key="4">
    <citation type="journal article" date="2004" name="Genome Res.">
        <title>The status, quality, and expansion of the NIH full-length cDNA project: the Mammalian Gene Collection (MGC).</title>
        <authorList>
            <consortium name="The MGC Project Team"/>
        </authorList>
    </citation>
    <scope>NUCLEOTIDE SEQUENCE [LARGE SCALE MRNA]</scope>
</reference>
<reference key="5">
    <citation type="journal article" date="1999" name="J. Biol. Chem.">
        <title>Embryonic lethality and defective neural tube closure in mice lacking squalene synthase.</title>
        <authorList>
            <person name="Tozawa R."/>
            <person name="Ishibashi S."/>
            <person name="Osuga J."/>
            <person name="Yagyu H."/>
            <person name="Oka T."/>
            <person name="Chen Z."/>
            <person name="Ohashi K."/>
            <person name="Perrey S."/>
            <person name="Shionoiri F."/>
            <person name="Yahagi N."/>
            <person name="Harada K."/>
            <person name="Gotoda T."/>
            <person name="Yazaki Y."/>
            <person name="Yamada N."/>
        </authorList>
    </citation>
    <scope>DISRUPTION PHENOTYPE</scope>
    <scope>CATALYTIC ACTIVITY</scope>
    <scope>FUNCTION</scope>
</reference>
<reference key="6">
    <citation type="journal article" date="2010" name="Cell">
        <title>A tissue-specific atlas of mouse protein phosphorylation and expression.</title>
        <authorList>
            <person name="Huttlin E.L."/>
            <person name="Jedrychowski M.P."/>
            <person name="Elias J.E."/>
            <person name="Goswami T."/>
            <person name="Rad R."/>
            <person name="Beausoleil S.A."/>
            <person name="Villen J."/>
            <person name="Haas W."/>
            <person name="Sowa M.E."/>
            <person name="Gygi S.P."/>
        </authorList>
    </citation>
    <scope>IDENTIFICATION BY MASS SPECTROMETRY [LARGE SCALE ANALYSIS]</scope>
    <source>
        <tissue>Liver</tissue>
        <tissue>Testis</tissue>
    </source>
</reference>
<comment type="function">
    <text evidence="1 4">Catalyzes the condensation of 2 farnesyl pyrophosphate (FPP) moieties to form squalene (PubMed:10521476). Proceeds in two distinct steps. In the first half-reaction, two molecules of FPP react to form the stable presqualene diphosphate intermediate (PSQPP), with concomitant release of a proton and a molecule of inorganic diphosphate. In the second half-reaction, PSQPP undergoes heterolysis, isomerization, and reduction with NADPH or NADH to form squalene. It is the first committed enzyme of the sterol biosynthesis pathway (By similarity).</text>
</comment>
<comment type="catalytic activity">
    <reaction evidence="4">
        <text>2 (2E,6E)-farnesyl diphosphate + NADPH + H(+) = squalene + 2 diphosphate + NADP(+)</text>
        <dbReference type="Rhea" id="RHEA:32295"/>
        <dbReference type="ChEBI" id="CHEBI:15378"/>
        <dbReference type="ChEBI" id="CHEBI:15440"/>
        <dbReference type="ChEBI" id="CHEBI:33019"/>
        <dbReference type="ChEBI" id="CHEBI:57783"/>
        <dbReference type="ChEBI" id="CHEBI:58349"/>
        <dbReference type="ChEBI" id="CHEBI:175763"/>
        <dbReference type="EC" id="2.5.1.21"/>
    </reaction>
</comment>
<comment type="catalytic activity">
    <reaction evidence="1">
        <text>2 (2E,6E)-farnesyl diphosphate + NADH + H(+) = squalene + 2 diphosphate + NAD(+)</text>
        <dbReference type="Rhea" id="RHEA:32299"/>
        <dbReference type="ChEBI" id="CHEBI:15378"/>
        <dbReference type="ChEBI" id="CHEBI:15440"/>
        <dbReference type="ChEBI" id="CHEBI:33019"/>
        <dbReference type="ChEBI" id="CHEBI:57540"/>
        <dbReference type="ChEBI" id="CHEBI:57945"/>
        <dbReference type="ChEBI" id="CHEBI:175763"/>
        <dbReference type="EC" id="2.5.1.21"/>
    </reaction>
    <physiologicalReaction direction="left-to-right" evidence="1">
        <dbReference type="Rhea" id="RHEA:32300"/>
    </physiologicalReaction>
</comment>
<comment type="catalytic activity">
    <reaction evidence="1">
        <text>presqualene diphosphate + NADH + H(+) = squalene + diphosphate + NAD(+)</text>
        <dbReference type="Rhea" id="RHEA:22228"/>
        <dbReference type="ChEBI" id="CHEBI:15378"/>
        <dbReference type="ChEBI" id="CHEBI:15440"/>
        <dbReference type="ChEBI" id="CHEBI:33019"/>
        <dbReference type="ChEBI" id="CHEBI:57310"/>
        <dbReference type="ChEBI" id="CHEBI:57540"/>
        <dbReference type="ChEBI" id="CHEBI:57945"/>
    </reaction>
    <physiologicalReaction direction="left-to-right" evidence="1">
        <dbReference type="Rhea" id="RHEA:22229"/>
    </physiologicalReaction>
</comment>
<comment type="catalytic activity">
    <reaction evidence="1">
        <text>presqualene diphosphate + NADPH + H(+) = squalene + diphosphate + NADP(+)</text>
        <dbReference type="Rhea" id="RHEA:22232"/>
        <dbReference type="ChEBI" id="CHEBI:15378"/>
        <dbReference type="ChEBI" id="CHEBI:15440"/>
        <dbReference type="ChEBI" id="CHEBI:33019"/>
        <dbReference type="ChEBI" id="CHEBI:57310"/>
        <dbReference type="ChEBI" id="CHEBI:57783"/>
        <dbReference type="ChEBI" id="CHEBI:58349"/>
    </reaction>
    <physiologicalReaction direction="left-to-right" evidence="1">
        <dbReference type="Rhea" id="RHEA:22233"/>
    </physiologicalReaction>
</comment>
<comment type="catalytic activity">
    <reaction evidence="1">
        <text>2 (2E,6E)-farnesyl diphosphate = presqualene diphosphate + diphosphate</text>
        <dbReference type="Rhea" id="RHEA:22672"/>
        <dbReference type="ChEBI" id="CHEBI:33019"/>
        <dbReference type="ChEBI" id="CHEBI:57310"/>
        <dbReference type="ChEBI" id="CHEBI:175763"/>
    </reaction>
    <physiologicalReaction direction="left-to-right" evidence="1">
        <dbReference type="Rhea" id="RHEA:22673"/>
    </physiologicalReaction>
</comment>
<comment type="cofactor">
    <cofactor>
        <name>Mg(2+)</name>
        <dbReference type="ChEBI" id="CHEBI:18420"/>
    </cofactor>
</comment>
<comment type="pathway">
    <text evidence="5">Terpene metabolism; lanosterol biosynthesis; lanosterol from farnesyl diphosphate: step 1/3.</text>
</comment>
<comment type="subcellular location">
    <subcellularLocation>
        <location evidence="2">Endoplasmic reticulum membrane</location>
        <topology evidence="3">Multi-pass membrane protein</topology>
    </subcellularLocation>
</comment>
<comment type="disruption phenotype">
    <text evidence="4">Deficient mice are embryonic lethal around midgestation (9.5-10.5 dpc). Embryos exhibit severe growth retardation and defective neural tube closure.</text>
</comment>
<comment type="similarity">
    <text evidence="5">Belongs to the phytoene/squalene synthase family.</text>
</comment>
<organism>
    <name type="scientific">Mus musculus</name>
    <name type="common">Mouse</name>
    <dbReference type="NCBI Taxonomy" id="10090"/>
    <lineage>
        <taxon>Eukaryota</taxon>
        <taxon>Metazoa</taxon>
        <taxon>Chordata</taxon>
        <taxon>Craniata</taxon>
        <taxon>Vertebrata</taxon>
        <taxon>Euteleostomi</taxon>
        <taxon>Mammalia</taxon>
        <taxon>Eutheria</taxon>
        <taxon>Euarchontoglires</taxon>
        <taxon>Glires</taxon>
        <taxon>Rodentia</taxon>
        <taxon>Myomorpha</taxon>
        <taxon>Muroidea</taxon>
        <taxon>Muridae</taxon>
        <taxon>Murinae</taxon>
        <taxon>Mus</taxon>
        <taxon>Mus</taxon>
    </lineage>
</organism>
<keyword id="KW-0152">Cholesterol biosynthesis</keyword>
<keyword id="KW-0153">Cholesterol metabolism</keyword>
<keyword id="KW-0256">Endoplasmic reticulum</keyword>
<keyword id="KW-0414">Isoprene biosynthesis</keyword>
<keyword id="KW-0444">Lipid biosynthesis</keyword>
<keyword id="KW-0443">Lipid metabolism</keyword>
<keyword id="KW-0460">Magnesium</keyword>
<keyword id="KW-0472">Membrane</keyword>
<keyword id="KW-0479">Metal-binding</keyword>
<keyword id="KW-0511">Multifunctional enzyme</keyword>
<keyword id="KW-0520">NAD</keyword>
<keyword id="KW-0521">NADP</keyword>
<keyword id="KW-1185">Reference proteome</keyword>
<keyword id="KW-0752">Steroid biosynthesis</keyword>
<keyword id="KW-0753">Steroid metabolism</keyword>
<keyword id="KW-0756">Sterol biosynthesis</keyword>
<keyword id="KW-1207">Sterol metabolism</keyword>
<keyword id="KW-0808">Transferase</keyword>
<keyword id="KW-0812">Transmembrane</keyword>
<keyword id="KW-1133">Transmembrane helix</keyword>
<dbReference type="EC" id="2.5.1.21" evidence="4"/>
<dbReference type="EMBL" id="D29016">
    <property type="protein sequence ID" value="BAA06102.1"/>
    <property type="molecule type" value="mRNA"/>
</dbReference>
<dbReference type="EMBL" id="AK076062">
    <property type="protein sequence ID" value="BAC36156.1"/>
    <property type="molecule type" value="mRNA"/>
</dbReference>
<dbReference type="EMBL" id="AK146766">
    <property type="protein sequence ID" value="BAE27418.1"/>
    <property type="molecule type" value="mRNA"/>
</dbReference>
<dbReference type="EMBL" id="AK158633">
    <property type="protein sequence ID" value="BAE34590.1"/>
    <property type="molecule type" value="mRNA"/>
</dbReference>
<dbReference type="EMBL" id="AK168629">
    <property type="protein sequence ID" value="BAE40489.1"/>
    <property type="molecule type" value="mRNA"/>
</dbReference>
<dbReference type="EMBL" id="AK169317">
    <property type="protein sequence ID" value="BAE41072.1"/>
    <property type="molecule type" value="mRNA"/>
</dbReference>
<dbReference type="EMBL" id="CH466535">
    <property type="protein sequence ID" value="EDL36069.1"/>
    <property type="molecule type" value="Genomic_DNA"/>
</dbReference>
<dbReference type="EMBL" id="BC054722">
    <property type="protein sequence ID" value="AAH54722.1"/>
    <property type="molecule type" value="mRNA"/>
</dbReference>
<dbReference type="EMBL" id="BC138301">
    <property type="protein sequence ID" value="AAI38302.1"/>
    <property type="molecule type" value="mRNA"/>
</dbReference>
<dbReference type="EMBL" id="BC138302">
    <property type="protein sequence ID" value="AAI38303.1"/>
    <property type="molecule type" value="mRNA"/>
</dbReference>
<dbReference type="CCDS" id="CCDS27198.1"/>
<dbReference type="PIR" id="S52075">
    <property type="entry name" value="S52075"/>
</dbReference>
<dbReference type="RefSeq" id="NP_001347140.1">
    <property type="nucleotide sequence ID" value="NM_001360211.2"/>
</dbReference>
<dbReference type="RefSeq" id="NP_034321.2">
    <property type="nucleotide sequence ID" value="NM_010191.3"/>
</dbReference>
<dbReference type="RefSeq" id="XP_017171333.1">
    <property type="nucleotide sequence ID" value="XM_017315844.1"/>
</dbReference>
<dbReference type="SMR" id="P53798"/>
<dbReference type="BioGRID" id="199625">
    <property type="interactions" value="1"/>
</dbReference>
<dbReference type="FunCoup" id="P53798">
    <property type="interactions" value="1577"/>
</dbReference>
<dbReference type="STRING" id="10090.ENSMUSP00000153671"/>
<dbReference type="ChEMBL" id="CHEMBL4778"/>
<dbReference type="iPTMnet" id="P53798"/>
<dbReference type="PhosphoSitePlus" id="P53798"/>
<dbReference type="SwissPalm" id="P53798"/>
<dbReference type="jPOST" id="P53798"/>
<dbReference type="PaxDb" id="10090-ENSMUSP00000055313"/>
<dbReference type="PeptideAtlas" id="P53798"/>
<dbReference type="ProteomicsDB" id="267725"/>
<dbReference type="Pumba" id="P53798"/>
<dbReference type="Antibodypedia" id="1355">
    <property type="antibodies" value="445 antibodies from 32 providers"/>
</dbReference>
<dbReference type="DNASU" id="14137"/>
<dbReference type="Ensembl" id="ENSMUST00000054963.10">
    <property type="protein sequence ID" value="ENSMUSP00000055313.10"/>
    <property type="gene ID" value="ENSMUSG00000021273.12"/>
</dbReference>
<dbReference type="Ensembl" id="ENSMUST00000224625.2">
    <property type="protein sequence ID" value="ENSMUSP00000153671.2"/>
    <property type="gene ID" value="ENSMUSG00000021273.12"/>
</dbReference>
<dbReference type="GeneID" id="14137"/>
<dbReference type="KEGG" id="mmu:14137"/>
<dbReference type="UCSC" id="uc007uhj.3">
    <property type="organism name" value="mouse"/>
</dbReference>
<dbReference type="AGR" id="MGI:102706"/>
<dbReference type="CTD" id="2222"/>
<dbReference type="MGI" id="MGI:102706">
    <property type="gene designation" value="Fdft1"/>
</dbReference>
<dbReference type="VEuPathDB" id="HostDB:ENSMUSG00000021273"/>
<dbReference type="eggNOG" id="KOG1459">
    <property type="taxonomic scope" value="Eukaryota"/>
</dbReference>
<dbReference type="GeneTree" id="ENSGT00390000016034"/>
<dbReference type="HOGENOM" id="CLU_031981_0_2_1"/>
<dbReference type="InParanoid" id="P53798"/>
<dbReference type="OMA" id="GEACQLM"/>
<dbReference type="OrthoDB" id="24463at9989"/>
<dbReference type="PhylomeDB" id="P53798"/>
<dbReference type="TreeFam" id="TF105316"/>
<dbReference type="Reactome" id="R-MMU-191273">
    <property type="pathway name" value="Cholesterol biosynthesis"/>
</dbReference>
<dbReference type="UniPathway" id="UPA00767">
    <property type="reaction ID" value="UER00751"/>
</dbReference>
<dbReference type="BioGRID-ORCS" id="14137">
    <property type="hits" value="6 hits in 64 CRISPR screens"/>
</dbReference>
<dbReference type="ChiTaRS" id="Fdft1">
    <property type="organism name" value="mouse"/>
</dbReference>
<dbReference type="PRO" id="PR:P53798"/>
<dbReference type="Proteomes" id="UP000000589">
    <property type="component" value="Chromosome 14"/>
</dbReference>
<dbReference type="RNAct" id="P53798">
    <property type="molecule type" value="protein"/>
</dbReference>
<dbReference type="Bgee" id="ENSMUSG00000021273">
    <property type="expression patterns" value="Expressed in primary oocyte and 131 other cell types or tissues"/>
</dbReference>
<dbReference type="ExpressionAtlas" id="P53798">
    <property type="expression patterns" value="baseline and differential"/>
</dbReference>
<dbReference type="GO" id="GO:0005789">
    <property type="term" value="C:endoplasmic reticulum membrane"/>
    <property type="evidence" value="ECO:0000250"/>
    <property type="project" value="UniProtKB"/>
</dbReference>
<dbReference type="GO" id="GO:0046872">
    <property type="term" value="F:metal ion binding"/>
    <property type="evidence" value="ECO:0007669"/>
    <property type="project" value="UniProtKB-KW"/>
</dbReference>
<dbReference type="GO" id="GO:0051996">
    <property type="term" value="F:squalene synthase [NAD(P)H] activity"/>
    <property type="evidence" value="ECO:0007669"/>
    <property type="project" value="UniProtKB-EC"/>
</dbReference>
<dbReference type="GO" id="GO:0006695">
    <property type="term" value="P:cholesterol biosynthetic process"/>
    <property type="evidence" value="ECO:0007669"/>
    <property type="project" value="UniProtKB-KW"/>
</dbReference>
<dbReference type="GO" id="GO:0045338">
    <property type="term" value="P:farnesyl diphosphate metabolic process"/>
    <property type="evidence" value="ECO:0007669"/>
    <property type="project" value="InterPro"/>
</dbReference>
<dbReference type="GO" id="GO:0008299">
    <property type="term" value="P:isoprenoid biosynthetic process"/>
    <property type="evidence" value="ECO:0007669"/>
    <property type="project" value="UniProtKB-KW"/>
</dbReference>
<dbReference type="CDD" id="cd00683">
    <property type="entry name" value="Trans_IPPS_HH"/>
    <property type="match status" value="1"/>
</dbReference>
<dbReference type="FunFam" id="1.10.600.10:FF:000053">
    <property type="entry name" value="Squalene synthase"/>
    <property type="match status" value="1"/>
</dbReference>
<dbReference type="Gene3D" id="1.10.600.10">
    <property type="entry name" value="Farnesyl Diphosphate Synthase"/>
    <property type="match status" value="1"/>
</dbReference>
<dbReference type="InterPro" id="IPR008949">
    <property type="entry name" value="Isoprenoid_synthase_dom_sf"/>
</dbReference>
<dbReference type="InterPro" id="IPR002060">
    <property type="entry name" value="Squ/phyt_synthse"/>
</dbReference>
<dbReference type="InterPro" id="IPR006449">
    <property type="entry name" value="Squal_synth-like"/>
</dbReference>
<dbReference type="InterPro" id="IPR019845">
    <property type="entry name" value="Squalene/phytoene_synthase_CS"/>
</dbReference>
<dbReference type="InterPro" id="IPR044844">
    <property type="entry name" value="Trans_IPPS_euk-type"/>
</dbReference>
<dbReference type="InterPro" id="IPR033904">
    <property type="entry name" value="Trans_IPPS_HH"/>
</dbReference>
<dbReference type="NCBIfam" id="TIGR01559">
    <property type="entry name" value="squal_synth"/>
    <property type="match status" value="1"/>
</dbReference>
<dbReference type="PANTHER" id="PTHR11626">
    <property type="entry name" value="FARNESYL-DIPHOSPHATE FARNESYLTRANSFERASE"/>
    <property type="match status" value="1"/>
</dbReference>
<dbReference type="PANTHER" id="PTHR11626:SF2">
    <property type="entry name" value="SQUALENE SYNTHASE"/>
    <property type="match status" value="1"/>
</dbReference>
<dbReference type="Pfam" id="PF00494">
    <property type="entry name" value="SQS_PSY"/>
    <property type="match status" value="1"/>
</dbReference>
<dbReference type="SFLD" id="SFLDS00005">
    <property type="entry name" value="Isoprenoid_Synthase_Type_I"/>
    <property type="match status" value="1"/>
</dbReference>
<dbReference type="SFLD" id="SFLDG01018">
    <property type="entry name" value="Squalene/Phytoene_Synthase_Lik"/>
    <property type="match status" value="1"/>
</dbReference>
<dbReference type="SUPFAM" id="SSF48576">
    <property type="entry name" value="Terpenoid synthases"/>
    <property type="match status" value="1"/>
</dbReference>
<dbReference type="PROSITE" id="PS01044">
    <property type="entry name" value="SQUALEN_PHYTOEN_SYN_1"/>
    <property type="match status" value="1"/>
</dbReference>
<dbReference type="PROSITE" id="PS01045">
    <property type="entry name" value="SQUALEN_PHYTOEN_SYN_2"/>
    <property type="match status" value="1"/>
</dbReference>
<gene>
    <name type="primary">Fdft1</name>
    <name type="synonym">Erg9</name>
</gene>
<sequence length="416" mass="48154">MEFVKCLGHPEEFYNLLRFRMGGRRNFIPKMDQDSLSSSLKTCYKYLNQTSRSFAAVIQALDGDIRHAICVFYLVLRALDTVEDDMSISVEKKIPLLCNFHTFLYDPEWRFTESKEKDRQVLEDFPTISLEFRNLAEKYQTVIDDICHRMGCGMAEFVDKDVTSKQDWDKYCHYVAGLVGIGLSRLFSASEFEDPIVGEDIECANSMGLFLQKTNIIRDYLEDQQEGRKFWPQEVWGRYIKKLEDFAKPENVDVAVQCLNELITNTLQHIPDVLTYLSRLRNQSVFNFCAIPQVMAIATLAACYNNQQVFKGVVKIRKGQAVTLMMDATNMPAVKAIIYQYIEEIYHRIPNSDPSSSKTKQVISKIRTQNLPNCQLISRSHYSPIYLSFIMLLAALSWQYLSTLSQVTEDYVQREH</sequence>
<proteinExistence type="evidence at protein level"/>
<evidence type="ECO:0000250" key="1">
    <source>
        <dbReference type="UniProtKB" id="P37268"/>
    </source>
</evidence>
<evidence type="ECO:0000250" key="2">
    <source>
        <dbReference type="UniProtKB" id="Q02769"/>
    </source>
</evidence>
<evidence type="ECO:0000255" key="3"/>
<evidence type="ECO:0000269" key="4">
    <source>
    </source>
</evidence>
<evidence type="ECO:0000305" key="5"/>